<accession>B5FPP5</accession>
<comment type="function">
    <text evidence="1">Activates expression of the rhaBAD and rhaT operons.</text>
</comment>
<comment type="subunit">
    <text evidence="1">Binds DNA as a dimer.</text>
</comment>
<comment type="subcellular location">
    <subcellularLocation>
        <location evidence="1">Cytoplasm</location>
    </subcellularLocation>
</comment>
<keyword id="KW-0010">Activator</keyword>
<keyword id="KW-0963">Cytoplasm</keyword>
<keyword id="KW-0238">DNA-binding</keyword>
<keyword id="KW-0677">Repeat</keyword>
<keyword id="KW-0684">Rhamnose metabolism</keyword>
<keyword id="KW-0804">Transcription</keyword>
<keyword id="KW-0805">Transcription regulation</keyword>
<evidence type="ECO:0000255" key="1">
    <source>
        <dbReference type="HAMAP-Rule" id="MF_01534"/>
    </source>
</evidence>
<name>RHAS_SALDC</name>
<reference key="1">
    <citation type="journal article" date="2011" name="J. Bacteriol.">
        <title>Comparative genomics of 28 Salmonella enterica isolates: evidence for CRISPR-mediated adaptive sublineage evolution.</title>
        <authorList>
            <person name="Fricke W.F."/>
            <person name="Mammel M.K."/>
            <person name="McDermott P.F."/>
            <person name="Tartera C."/>
            <person name="White D.G."/>
            <person name="Leclerc J.E."/>
            <person name="Ravel J."/>
            <person name="Cebula T.A."/>
        </authorList>
    </citation>
    <scope>NUCLEOTIDE SEQUENCE [LARGE SCALE GENOMIC DNA]</scope>
    <source>
        <strain>CT_02021853</strain>
    </source>
</reference>
<sequence>MTVLHSVDFFPSGKAPVAIEPRLPQAAFPEHHHDFHEIVIVEHCTGIHVFNGQPYTISGGTVCFVRDHDRHLYEHTDNLCLTNVLWRSPDAFQFLAGLEQLLPQEQDGYYPSHWRVNQSALQQVRQLVGLMERAGDGMDAPAVANREILFMQLLVLLRRSSLMEGATNNDAKLNQLMAWLEDHFAEEVCWEAVAEQFSLSLRTLHRQLKQHTGLTPQRYLNRLRLIKARHLLRHSDHSVTEIAYRCGFGDSNHFSTLFRREFNWSPRDIRQGRDAIIQ</sequence>
<gene>
    <name evidence="1" type="primary">rhaS</name>
    <name type="ordered locus">SeD_A4443</name>
</gene>
<protein>
    <recommendedName>
        <fullName evidence="1">HTH-type transcriptional activator RhaS</fullName>
    </recommendedName>
    <alternativeName>
        <fullName evidence="1">L-rhamnose operon regulatory protein RhaS</fullName>
    </alternativeName>
</protein>
<organism>
    <name type="scientific">Salmonella dublin (strain CT_02021853)</name>
    <dbReference type="NCBI Taxonomy" id="439851"/>
    <lineage>
        <taxon>Bacteria</taxon>
        <taxon>Pseudomonadati</taxon>
        <taxon>Pseudomonadota</taxon>
        <taxon>Gammaproteobacteria</taxon>
        <taxon>Enterobacterales</taxon>
        <taxon>Enterobacteriaceae</taxon>
        <taxon>Salmonella</taxon>
    </lineage>
</organism>
<dbReference type="EMBL" id="CP001144">
    <property type="protein sequence ID" value="ACH76441.1"/>
    <property type="molecule type" value="Genomic_DNA"/>
</dbReference>
<dbReference type="RefSeq" id="WP_000217106.1">
    <property type="nucleotide sequence ID" value="NC_011205.1"/>
</dbReference>
<dbReference type="SMR" id="B5FPP5"/>
<dbReference type="KEGG" id="sed:SeD_A4443"/>
<dbReference type="HOGENOM" id="CLU_000445_88_5_6"/>
<dbReference type="Proteomes" id="UP000008322">
    <property type="component" value="Chromosome"/>
</dbReference>
<dbReference type="GO" id="GO:0005737">
    <property type="term" value="C:cytoplasm"/>
    <property type="evidence" value="ECO:0007669"/>
    <property type="project" value="UniProtKB-SubCell"/>
</dbReference>
<dbReference type="GO" id="GO:0003700">
    <property type="term" value="F:DNA-binding transcription factor activity"/>
    <property type="evidence" value="ECO:0007669"/>
    <property type="project" value="UniProtKB-UniRule"/>
</dbReference>
<dbReference type="GO" id="GO:0043565">
    <property type="term" value="F:sequence-specific DNA binding"/>
    <property type="evidence" value="ECO:0007669"/>
    <property type="project" value="InterPro"/>
</dbReference>
<dbReference type="GO" id="GO:0045893">
    <property type="term" value="P:positive regulation of DNA-templated transcription"/>
    <property type="evidence" value="ECO:0007669"/>
    <property type="project" value="UniProtKB-UniRule"/>
</dbReference>
<dbReference type="GO" id="GO:0019299">
    <property type="term" value="P:rhamnose metabolic process"/>
    <property type="evidence" value="ECO:0007669"/>
    <property type="project" value="UniProtKB-UniRule"/>
</dbReference>
<dbReference type="CDD" id="cd06977">
    <property type="entry name" value="cupin_RhaR_RhaS-like_N"/>
    <property type="match status" value="1"/>
</dbReference>
<dbReference type="Gene3D" id="1.10.10.60">
    <property type="entry name" value="Homeodomain-like"/>
    <property type="match status" value="1"/>
</dbReference>
<dbReference type="Gene3D" id="2.60.120.10">
    <property type="entry name" value="Jelly Rolls"/>
    <property type="match status" value="1"/>
</dbReference>
<dbReference type="HAMAP" id="MF_01534">
    <property type="entry name" value="HTH_type_RhaS"/>
    <property type="match status" value="1"/>
</dbReference>
<dbReference type="InterPro" id="IPR003313">
    <property type="entry name" value="AraC-bd"/>
</dbReference>
<dbReference type="InterPro" id="IPR050204">
    <property type="entry name" value="AraC_XylS_family_regulators"/>
</dbReference>
<dbReference type="InterPro" id="IPR009057">
    <property type="entry name" value="Homeodomain-like_sf"/>
</dbReference>
<dbReference type="InterPro" id="IPR037923">
    <property type="entry name" value="HTH-like"/>
</dbReference>
<dbReference type="InterPro" id="IPR018060">
    <property type="entry name" value="HTH_AraC"/>
</dbReference>
<dbReference type="InterPro" id="IPR018062">
    <property type="entry name" value="HTH_AraC-typ_CS"/>
</dbReference>
<dbReference type="InterPro" id="IPR047220">
    <property type="entry name" value="RhaR_RhaS-like_N"/>
</dbReference>
<dbReference type="InterPro" id="IPR014710">
    <property type="entry name" value="RmlC-like_jellyroll"/>
</dbReference>
<dbReference type="InterPro" id="IPR020449">
    <property type="entry name" value="Tscrpt_reg_AraC-type_HTH"/>
</dbReference>
<dbReference type="InterPro" id="IPR023609">
    <property type="entry name" value="Tscrpt_reg_HTH_RhaS"/>
</dbReference>
<dbReference type="NCBIfam" id="NF010028">
    <property type="entry name" value="PRK13503.1"/>
    <property type="match status" value="1"/>
</dbReference>
<dbReference type="PANTHER" id="PTHR46796:SF13">
    <property type="entry name" value="HTH-TYPE TRANSCRIPTIONAL ACTIVATOR RHAS"/>
    <property type="match status" value="1"/>
</dbReference>
<dbReference type="PANTHER" id="PTHR46796">
    <property type="entry name" value="HTH-TYPE TRANSCRIPTIONAL ACTIVATOR RHAS-RELATED"/>
    <property type="match status" value="1"/>
</dbReference>
<dbReference type="Pfam" id="PF02311">
    <property type="entry name" value="AraC_binding"/>
    <property type="match status" value="1"/>
</dbReference>
<dbReference type="Pfam" id="PF12833">
    <property type="entry name" value="HTH_18"/>
    <property type="match status" value="1"/>
</dbReference>
<dbReference type="PRINTS" id="PR00032">
    <property type="entry name" value="HTHARAC"/>
</dbReference>
<dbReference type="SMART" id="SM00342">
    <property type="entry name" value="HTH_ARAC"/>
    <property type="match status" value="1"/>
</dbReference>
<dbReference type="SUPFAM" id="SSF46689">
    <property type="entry name" value="Homeodomain-like"/>
    <property type="match status" value="2"/>
</dbReference>
<dbReference type="SUPFAM" id="SSF51215">
    <property type="entry name" value="Regulatory protein AraC"/>
    <property type="match status" value="1"/>
</dbReference>
<dbReference type="PROSITE" id="PS00041">
    <property type="entry name" value="HTH_ARAC_FAMILY_1"/>
    <property type="match status" value="1"/>
</dbReference>
<dbReference type="PROSITE" id="PS01124">
    <property type="entry name" value="HTH_ARAC_FAMILY_2"/>
    <property type="match status" value="1"/>
</dbReference>
<feature type="chain" id="PRO_1000200959" description="HTH-type transcriptional activator RhaS">
    <location>
        <begin position="1"/>
        <end position="278"/>
    </location>
</feature>
<feature type="domain" description="HTH araC/xylS-type" evidence="1">
    <location>
        <begin position="174"/>
        <end position="272"/>
    </location>
</feature>
<feature type="DNA-binding region" description="H-T-H motif" evidence="1">
    <location>
        <begin position="191"/>
        <end position="212"/>
    </location>
</feature>
<feature type="DNA-binding region" description="H-T-H motif" evidence="1">
    <location>
        <begin position="239"/>
        <end position="262"/>
    </location>
</feature>
<feature type="site" description="Interaction with sigma-70" evidence="1">
    <location>
        <position position="241"/>
    </location>
</feature>
<feature type="site" description="Interaction with sigma-70" evidence="1">
    <location>
        <position position="250"/>
    </location>
</feature>
<proteinExistence type="inferred from homology"/>